<gene>
    <name evidence="1" type="primary">hutH</name>
    <name type="ordered locus">BAMEG_0922</name>
</gene>
<organism>
    <name type="scientific">Bacillus anthracis (strain CDC 684 / NRRL 3495)</name>
    <dbReference type="NCBI Taxonomy" id="568206"/>
    <lineage>
        <taxon>Bacteria</taxon>
        <taxon>Bacillati</taxon>
        <taxon>Bacillota</taxon>
        <taxon>Bacilli</taxon>
        <taxon>Bacillales</taxon>
        <taxon>Bacillaceae</taxon>
        <taxon>Bacillus</taxon>
        <taxon>Bacillus cereus group</taxon>
    </lineage>
</organism>
<feature type="chain" id="PRO_1000125088" description="Histidine ammonia-lyase">
    <location>
        <begin position="1"/>
        <end position="505"/>
    </location>
</feature>
<feature type="modified residue" description="2,3-didehydroalanine (Ser)" evidence="1">
    <location>
        <position position="142"/>
    </location>
</feature>
<feature type="cross-link" description="5-imidazolinone (Ala-Gly)" evidence="1">
    <location>
        <begin position="141"/>
        <end position="143"/>
    </location>
</feature>
<name>HUTH_BACAC</name>
<accession>C3L982</accession>
<dbReference type="EC" id="4.3.1.3" evidence="1"/>
<dbReference type="EMBL" id="CP001215">
    <property type="protein sequence ID" value="ACP12403.1"/>
    <property type="molecule type" value="Genomic_DNA"/>
</dbReference>
<dbReference type="RefSeq" id="WP_000631851.1">
    <property type="nucleotide sequence ID" value="NC_012581.1"/>
</dbReference>
<dbReference type="SMR" id="C3L982"/>
<dbReference type="GeneID" id="45023433"/>
<dbReference type="KEGG" id="bah:BAMEG_0922"/>
<dbReference type="HOGENOM" id="CLU_014801_4_0_9"/>
<dbReference type="UniPathway" id="UPA00379">
    <property type="reaction ID" value="UER00549"/>
</dbReference>
<dbReference type="GO" id="GO:0005737">
    <property type="term" value="C:cytoplasm"/>
    <property type="evidence" value="ECO:0007669"/>
    <property type="project" value="UniProtKB-SubCell"/>
</dbReference>
<dbReference type="GO" id="GO:0004397">
    <property type="term" value="F:histidine ammonia-lyase activity"/>
    <property type="evidence" value="ECO:0007669"/>
    <property type="project" value="UniProtKB-UniRule"/>
</dbReference>
<dbReference type="GO" id="GO:0019556">
    <property type="term" value="P:L-histidine catabolic process to glutamate and formamide"/>
    <property type="evidence" value="ECO:0007669"/>
    <property type="project" value="UniProtKB-UniPathway"/>
</dbReference>
<dbReference type="GO" id="GO:0019557">
    <property type="term" value="P:L-histidine catabolic process to glutamate and formate"/>
    <property type="evidence" value="ECO:0007669"/>
    <property type="project" value="UniProtKB-UniPathway"/>
</dbReference>
<dbReference type="CDD" id="cd00332">
    <property type="entry name" value="PAL-HAL"/>
    <property type="match status" value="1"/>
</dbReference>
<dbReference type="FunFam" id="1.10.275.10:FF:000008">
    <property type="entry name" value="Histidine ammonia-lyase"/>
    <property type="match status" value="1"/>
</dbReference>
<dbReference type="FunFam" id="1.20.200.10:FF:000003">
    <property type="entry name" value="Histidine ammonia-lyase"/>
    <property type="match status" value="1"/>
</dbReference>
<dbReference type="Gene3D" id="1.20.200.10">
    <property type="entry name" value="Fumarase/aspartase (Central domain)"/>
    <property type="match status" value="1"/>
</dbReference>
<dbReference type="Gene3D" id="1.10.275.10">
    <property type="entry name" value="Fumarase/aspartase (N-terminal domain)"/>
    <property type="match status" value="1"/>
</dbReference>
<dbReference type="HAMAP" id="MF_00229">
    <property type="entry name" value="His_ammonia_lyase"/>
    <property type="match status" value="1"/>
</dbReference>
<dbReference type="InterPro" id="IPR001106">
    <property type="entry name" value="Aromatic_Lyase"/>
</dbReference>
<dbReference type="InterPro" id="IPR024083">
    <property type="entry name" value="Fumarase/histidase_N"/>
</dbReference>
<dbReference type="InterPro" id="IPR005921">
    <property type="entry name" value="HutH"/>
</dbReference>
<dbReference type="InterPro" id="IPR008948">
    <property type="entry name" value="L-Aspartase-like"/>
</dbReference>
<dbReference type="InterPro" id="IPR022313">
    <property type="entry name" value="Phe/His_NH3-lyase_AS"/>
</dbReference>
<dbReference type="NCBIfam" id="TIGR01225">
    <property type="entry name" value="hutH"/>
    <property type="match status" value="1"/>
</dbReference>
<dbReference type="NCBIfam" id="NF006871">
    <property type="entry name" value="PRK09367.1"/>
    <property type="match status" value="1"/>
</dbReference>
<dbReference type="PANTHER" id="PTHR10362">
    <property type="entry name" value="HISTIDINE AMMONIA-LYASE"/>
    <property type="match status" value="1"/>
</dbReference>
<dbReference type="Pfam" id="PF00221">
    <property type="entry name" value="Lyase_aromatic"/>
    <property type="match status" value="1"/>
</dbReference>
<dbReference type="SUPFAM" id="SSF48557">
    <property type="entry name" value="L-aspartase-like"/>
    <property type="match status" value="1"/>
</dbReference>
<dbReference type="PROSITE" id="PS00488">
    <property type="entry name" value="PAL_HISTIDASE"/>
    <property type="match status" value="1"/>
</dbReference>
<evidence type="ECO:0000255" key="1">
    <source>
        <dbReference type="HAMAP-Rule" id="MF_00229"/>
    </source>
</evidence>
<keyword id="KW-0963">Cytoplasm</keyword>
<keyword id="KW-0369">Histidine metabolism</keyword>
<keyword id="KW-0456">Lyase</keyword>
<reference key="1">
    <citation type="submission" date="2008-10" db="EMBL/GenBank/DDBJ databases">
        <title>Genome sequence of Bacillus anthracis str. CDC 684.</title>
        <authorList>
            <person name="Dodson R.J."/>
            <person name="Munk A.C."/>
            <person name="Brettin T."/>
            <person name="Bruce D."/>
            <person name="Detter C."/>
            <person name="Tapia R."/>
            <person name="Han C."/>
            <person name="Sutton G."/>
            <person name="Sims D."/>
        </authorList>
    </citation>
    <scope>NUCLEOTIDE SEQUENCE [LARGE SCALE GENOMIC DNA]</scope>
    <source>
        <strain>CDC 684 / NRRL 3495</strain>
    </source>
</reference>
<proteinExistence type="inferred from homology"/>
<protein>
    <recommendedName>
        <fullName evidence="1">Histidine ammonia-lyase</fullName>
        <shortName evidence="1">Histidase</shortName>
        <ecNumber evidence="1">4.3.1.3</ecNumber>
    </recommendedName>
</protein>
<comment type="catalytic activity">
    <reaction evidence="1">
        <text>L-histidine = trans-urocanate + NH4(+)</text>
        <dbReference type="Rhea" id="RHEA:21232"/>
        <dbReference type="ChEBI" id="CHEBI:17771"/>
        <dbReference type="ChEBI" id="CHEBI:28938"/>
        <dbReference type="ChEBI" id="CHEBI:57595"/>
        <dbReference type="EC" id="4.3.1.3"/>
    </reaction>
</comment>
<comment type="pathway">
    <text evidence="1">Amino-acid degradation; L-histidine degradation into L-glutamate; N-formimidoyl-L-glutamate from L-histidine: step 1/3.</text>
</comment>
<comment type="subcellular location">
    <subcellularLocation>
        <location evidence="1">Cytoplasm</location>
    </subcellularLocation>
</comment>
<comment type="PTM">
    <text evidence="1">Contains an active site 4-methylidene-imidazol-5-one (MIO), which is formed autocatalytically by cyclization and dehydration of residues Ala-Ser-Gly.</text>
</comment>
<comment type="similarity">
    <text evidence="1">Belongs to the PAL/histidase family.</text>
</comment>
<sequence>MITLTGHTLTIEEMKRLLLEGEGVTACPTSMQKVAECREVVEKIVENGKVVYGITTGFGKFSDVLIQKDDVKALQHNLIQSHACGIGDPFPEEVSRGMLILRANTMLKGVSGVRPLVVNMLLEFVNRKIHPVVPQQGSLGASGDLAPLSHLALILLGEGEVFYKGKRVHAMVALTEEGLEPIELEAKEGLALINGTQAMTAQGVLSYIEAEATAYQAELIASMTIEGLQGIIDAFDENVHKARGYKEQVEVASRIRDILHDSKLTTKQGELRVQDAYSLRCIPQVHGASWQVLNYVKEKLEIEMNAATDNPLIFDGGEKVISGGNFHGQPIAFAMDFLKVGMAELANISERRIERLVNPQLNDLPPFLSPEPGLQSGAMIMQYAAASLVSENKTLAHPASVDSIPSSANQEDHVSMGTIASRHAHQIIQNVRRVLSIEMICAMQAAEYRGIENMSTVTKSFYHQGRQQVPSITNDRIFSTDIENITHWLKTNYSIKERLDVNAAL</sequence>